<name>RS8_YERPB</name>
<dbReference type="EMBL" id="CP001048">
    <property type="protein sequence ID" value="ACC90825.1"/>
    <property type="molecule type" value="Genomic_DNA"/>
</dbReference>
<dbReference type="RefSeq" id="WP_002213332.1">
    <property type="nucleotide sequence ID" value="NZ_CP009780.1"/>
</dbReference>
<dbReference type="SMR" id="B2K523"/>
<dbReference type="GeneID" id="96663182"/>
<dbReference type="KEGG" id="ypb:YPTS_3876"/>
<dbReference type="PATRIC" id="fig|502801.10.peg.3341"/>
<dbReference type="GO" id="GO:1990904">
    <property type="term" value="C:ribonucleoprotein complex"/>
    <property type="evidence" value="ECO:0007669"/>
    <property type="project" value="UniProtKB-KW"/>
</dbReference>
<dbReference type="GO" id="GO:0005840">
    <property type="term" value="C:ribosome"/>
    <property type="evidence" value="ECO:0007669"/>
    <property type="project" value="UniProtKB-KW"/>
</dbReference>
<dbReference type="GO" id="GO:0019843">
    <property type="term" value="F:rRNA binding"/>
    <property type="evidence" value="ECO:0007669"/>
    <property type="project" value="UniProtKB-UniRule"/>
</dbReference>
<dbReference type="GO" id="GO:0003735">
    <property type="term" value="F:structural constituent of ribosome"/>
    <property type="evidence" value="ECO:0007669"/>
    <property type="project" value="InterPro"/>
</dbReference>
<dbReference type="GO" id="GO:0006412">
    <property type="term" value="P:translation"/>
    <property type="evidence" value="ECO:0007669"/>
    <property type="project" value="UniProtKB-UniRule"/>
</dbReference>
<dbReference type="FunFam" id="3.30.1370.30:FF:000003">
    <property type="entry name" value="30S ribosomal protein S8"/>
    <property type="match status" value="1"/>
</dbReference>
<dbReference type="FunFam" id="3.30.1490.10:FF:000001">
    <property type="entry name" value="30S ribosomal protein S8"/>
    <property type="match status" value="1"/>
</dbReference>
<dbReference type="Gene3D" id="3.30.1370.30">
    <property type="match status" value="1"/>
</dbReference>
<dbReference type="Gene3D" id="3.30.1490.10">
    <property type="match status" value="1"/>
</dbReference>
<dbReference type="HAMAP" id="MF_01302_B">
    <property type="entry name" value="Ribosomal_uS8_B"/>
    <property type="match status" value="1"/>
</dbReference>
<dbReference type="InterPro" id="IPR000630">
    <property type="entry name" value="Ribosomal_uS8"/>
</dbReference>
<dbReference type="InterPro" id="IPR047863">
    <property type="entry name" value="Ribosomal_uS8_CS"/>
</dbReference>
<dbReference type="InterPro" id="IPR035987">
    <property type="entry name" value="Ribosomal_uS8_sf"/>
</dbReference>
<dbReference type="NCBIfam" id="NF001109">
    <property type="entry name" value="PRK00136.1"/>
    <property type="match status" value="1"/>
</dbReference>
<dbReference type="PANTHER" id="PTHR11758">
    <property type="entry name" value="40S RIBOSOMAL PROTEIN S15A"/>
    <property type="match status" value="1"/>
</dbReference>
<dbReference type="Pfam" id="PF00410">
    <property type="entry name" value="Ribosomal_S8"/>
    <property type="match status" value="1"/>
</dbReference>
<dbReference type="SUPFAM" id="SSF56047">
    <property type="entry name" value="Ribosomal protein S8"/>
    <property type="match status" value="1"/>
</dbReference>
<dbReference type="PROSITE" id="PS00053">
    <property type="entry name" value="RIBOSOMAL_S8"/>
    <property type="match status" value="1"/>
</dbReference>
<feature type="chain" id="PRO_1000140641" description="Small ribosomal subunit protein uS8">
    <location>
        <begin position="1"/>
        <end position="130"/>
    </location>
</feature>
<reference key="1">
    <citation type="submission" date="2008-04" db="EMBL/GenBank/DDBJ databases">
        <title>Complete sequence of Yersinia pseudotuberculosis PB1/+.</title>
        <authorList>
            <person name="Copeland A."/>
            <person name="Lucas S."/>
            <person name="Lapidus A."/>
            <person name="Glavina del Rio T."/>
            <person name="Dalin E."/>
            <person name="Tice H."/>
            <person name="Bruce D."/>
            <person name="Goodwin L."/>
            <person name="Pitluck S."/>
            <person name="Munk A.C."/>
            <person name="Brettin T."/>
            <person name="Detter J.C."/>
            <person name="Han C."/>
            <person name="Tapia R."/>
            <person name="Schmutz J."/>
            <person name="Larimer F."/>
            <person name="Land M."/>
            <person name="Hauser L."/>
            <person name="Challacombe J.F."/>
            <person name="Green L."/>
            <person name="Lindler L.E."/>
            <person name="Nikolich M.P."/>
            <person name="Richardson P."/>
        </authorList>
    </citation>
    <scope>NUCLEOTIDE SEQUENCE [LARGE SCALE GENOMIC DNA]</scope>
    <source>
        <strain>PB1/+</strain>
    </source>
</reference>
<keyword id="KW-0687">Ribonucleoprotein</keyword>
<keyword id="KW-0689">Ribosomal protein</keyword>
<keyword id="KW-0694">RNA-binding</keyword>
<keyword id="KW-0699">rRNA-binding</keyword>
<proteinExistence type="inferred from homology"/>
<accession>B2K523</accession>
<sequence length="130" mass="14109">MSMQDPIADMLTRIRNGQAANKVAVTMPSSKLKVAIANVLKEEGFIEDFKIEGDTKPVLELALKYFQGKAVVESIQRISRPGLRIYKKKDELPKVMAGLGIAVISTSKGVMTDRAARQAGLGGEIICYVA</sequence>
<organism>
    <name type="scientific">Yersinia pseudotuberculosis serotype IB (strain PB1/+)</name>
    <dbReference type="NCBI Taxonomy" id="502801"/>
    <lineage>
        <taxon>Bacteria</taxon>
        <taxon>Pseudomonadati</taxon>
        <taxon>Pseudomonadota</taxon>
        <taxon>Gammaproteobacteria</taxon>
        <taxon>Enterobacterales</taxon>
        <taxon>Yersiniaceae</taxon>
        <taxon>Yersinia</taxon>
    </lineage>
</organism>
<protein>
    <recommendedName>
        <fullName evidence="1">Small ribosomal subunit protein uS8</fullName>
    </recommendedName>
    <alternativeName>
        <fullName evidence="2">30S ribosomal protein S8</fullName>
    </alternativeName>
</protein>
<comment type="function">
    <text evidence="1">One of the primary rRNA binding proteins, it binds directly to 16S rRNA central domain where it helps coordinate assembly of the platform of the 30S subunit.</text>
</comment>
<comment type="subunit">
    <text evidence="1">Part of the 30S ribosomal subunit. Contacts proteins S5 and S12.</text>
</comment>
<comment type="similarity">
    <text evidence="1">Belongs to the universal ribosomal protein uS8 family.</text>
</comment>
<gene>
    <name evidence="1" type="primary">rpsH</name>
    <name type="ordered locus">YPTS_3876</name>
</gene>
<evidence type="ECO:0000255" key="1">
    <source>
        <dbReference type="HAMAP-Rule" id="MF_01302"/>
    </source>
</evidence>
<evidence type="ECO:0000305" key="2"/>